<comment type="function">
    <text evidence="2">Involved in base excision repair of DNA damaged by oxidation or by mutagenic agents. Acts as a DNA glycosylase that recognizes and removes damaged bases. Has a preference for oxidized purines, such as 7,8-dihydro-8-oxoguanine (8-oxoG). Has AP (apurinic/apyrimidinic) lyase activity and introduces nicks in the DNA strand. Cleaves the DNA backbone by beta-delta elimination to generate a single-strand break at the site of the removed base with both 3'- and 5'-phosphates.</text>
</comment>
<comment type="catalytic activity">
    <reaction evidence="2">
        <text>Hydrolysis of DNA containing ring-opened 7-methylguanine residues, releasing 2,6-diamino-4-hydroxy-5-(N-methyl)formamidopyrimidine.</text>
        <dbReference type="EC" id="3.2.2.23"/>
    </reaction>
</comment>
<comment type="catalytic activity">
    <reaction evidence="2">
        <text>2'-deoxyribonucleotide-(2'-deoxyribose 5'-phosphate)-2'-deoxyribonucleotide-DNA = a 3'-end 2'-deoxyribonucleotide-(2,3-dehydro-2,3-deoxyribose 5'-phosphate)-DNA + a 5'-end 5'-phospho-2'-deoxyribonucleoside-DNA + H(+)</text>
        <dbReference type="Rhea" id="RHEA:66592"/>
        <dbReference type="Rhea" id="RHEA-COMP:13180"/>
        <dbReference type="Rhea" id="RHEA-COMP:16897"/>
        <dbReference type="Rhea" id="RHEA-COMP:17067"/>
        <dbReference type="ChEBI" id="CHEBI:15378"/>
        <dbReference type="ChEBI" id="CHEBI:136412"/>
        <dbReference type="ChEBI" id="CHEBI:157695"/>
        <dbReference type="ChEBI" id="CHEBI:167181"/>
        <dbReference type="EC" id="4.2.99.18"/>
    </reaction>
</comment>
<comment type="cofactor">
    <cofactor evidence="2">
        <name>Zn(2+)</name>
        <dbReference type="ChEBI" id="CHEBI:29105"/>
    </cofactor>
    <text evidence="2">Binds 1 zinc ion per subunit.</text>
</comment>
<comment type="subunit">
    <text evidence="2">Monomer.</text>
</comment>
<comment type="similarity">
    <text evidence="2">Belongs to the FPG family.</text>
</comment>
<name>FPG_SHESW</name>
<accession>A1RE25</accession>
<protein>
    <recommendedName>
        <fullName evidence="2">Formamidopyrimidine-DNA glycosylase</fullName>
        <shortName evidence="2">Fapy-DNA glycosylase</shortName>
        <ecNumber evidence="2">3.2.2.23</ecNumber>
    </recommendedName>
    <alternativeName>
        <fullName evidence="2">DNA-(apurinic or apyrimidinic site) lyase MutM</fullName>
        <shortName evidence="2">AP lyase MutM</shortName>
        <ecNumber evidence="2">4.2.99.18</ecNumber>
    </alternativeName>
</protein>
<reference key="1">
    <citation type="submission" date="2006-12" db="EMBL/GenBank/DDBJ databases">
        <title>Complete sequence of Shewanella sp. W3-18-1.</title>
        <authorList>
            <consortium name="US DOE Joint Genome Institute"/>
            <person name="Copeland A."/>
            <person name="Lucas S."/>
            <person name="Lapidus A."/>
            <person name="Barry K."/>
            <person name="Detter J.C."/>
            <person name="Glavina del Rio T."/>
            <person name="Hammon N."/>
            <person name="Israni S."/>
            <person name="Dalin E."/>
            <person name="Tice H."/>
            <person name="Pitluck S."/>
            <person name="Chain P."/>
            <person name="Malfatti S."/>
            <person name="Shin M."/>
            <person name="Vergez L."/>
            <person name="Schmutz J."/>
            <person name="Larimer F."/>
            <person name="Land M."/>
            <person name="Hauser L."/>
            <person name="Kyrpides N."/>
            <person name="Lykidis A."/>
            <person name="Tiedje J."/>
            <person name="Richardson P."/>
        </authorList>
    </citation>
    <scope>NUCLEOTIDE SEQUENCE [LARGE SCALE GENOMIC DNA]</scope>
    <source>
        <strain>W3-18-1</strain>
    </source>
</reference>
<proteinExistence type="inferred from homology"/>
<sequence length="271" mass="29800">MPELPEVEVTRQGIAPYLVEQTVIDLVIRNGSLRWPVPDIAKQIIGQVIRQVRRRAKYLLIDTDAGTSIVHLGMSGSLRILPHDTPVEKHDHIDLVLANGRILRFNDPRRFGAWLWCELPEEAHPLLAKLGPEPLTNAFNVKQLAAALTGKKKAIKLCLMDNHIVVGVGNIYANEALFAAGIHPEAEAGKIDIERLTVLVAEVKQILAHAIKQGGTTLKDFTNADGKPGYFAQKLHVYGRGGETCTSCGNLLSEIRLGQRTTVFCGICQTR</sequence>
<evidence type="ECO:0000250" key="1"/>
<evidence type="ECO:0000255" key="2">
    <source>
        <dbReference type="HAMAP-Rule" id="MF_00103"/>
    </source>
</evidence>
<organism>
    <name type="scientific">Shewanella sp. (strain W3-18-1)</name>
    <dbReference type="NCBI Taxonomy" id="351745"/>
    <lineage>
        <taxon>Bacteria</taxon>
        <taxon>Pseudomonadati</taxon>
        <taxon>Pseudomonadota</taxon>
        <taxon>Gammaproteobacteria</taxon>
        <taxon>Alteromonadales</taxon>
        <taxon>Shewanellaceae</taxon>
        <taxon>Shewanella</taxon>
    </lineage>
</organism>
<keyword id="KW-0227">DNA damage</keyword>
<keyword id="KW-0234">DNA repair</keyword>
<keyword id="KW-0238">DNA-binding</keyword>
<keyword id="KW-0326">Glycosidase</keyword>
<keyword id="KW-0378">Hydrolase</keyword>
<keyword id="KW-0456">Lyase</keyword>
<keyword id="KW-0479">Metal-binding</keyword>
<keyword id="KW-0511">Multifunctional enzyme</keyword>
<keyword id="KW-0862">Zinc</keyword>
<keyword id="KW-0863">Zinc-finger</keyword>
<dbReference type="EC" id="3.2.2.23" evidence="2"/>
<dbReference type="EC" id="4.2.99.18" evidence="2"/>
<dbReference type="EMBL" id="CP000503">
    <property type="protein sequence ID" value="ABM22920.1"/>
    <property type="molecule type" value="Genomic_DNA"/>
</dbReference>
<dbReference type="RefSeq" id="WP_011787487.1">
    <property type="nucleotide sequence ID" value="NC_008750.1"/>
</dbReference>
<dbReference type="SMR" id="A1RE25"/>
<dbReference type="KEGG" id="shw:Sputw3181_0067"/>
<dbReference type="HOGENOM" id="CLU_038423_1_1_6"/>
<dbReference type="Proteomes" id="UP000002597">
    <property type="component" value="Chromosome"/>
</dbReference>
<dbReference type="GO" id="GO:0034039">
    <property type="term" value="F:8-oxo-7,8-dihydroguanine DNA N-glycosylase activity"/>
    <property type="evidence" value="ECO:0007669"/>
    <property type="project" value="TreeGrafter"/>
</dbReference>
<dbReference type="GO" id="GO:0140078">
    <property type="term" value="F:class I DNA-(apurinic or apyrimidinic site) endonuclease activity"/>
    <property type="evidence" value="ECO:0007669"/>
    <property type="project" value="UniProtKB-EC"/>
</dbReference>
<dbReference type="GO" id="GO:0003684">
    <property type="term" value="F:damaged DNA binding"/>
    <property type="evidence" value="ECO:0007669"/>
    <property type="project" value="InterPro"/>
</dbReference>
<dbReference type="GO" id="GO:0008270">
    <property type="term" value="F:zinc ion binding"/>
    <property type="evidence" value="ECO:0007669"/>
    <property type="project" value="UniProtKB-UniRule"/>
</dbReference>
<dbReference type="GO" id="GO:0006284">
    <property type="term" value="P:base-excision repair"/>
    <property type="evidence" value="ECO:0007669"/>
    <property type="project" value="InterPro"/>
</dbReference>
<dbReference type="CDD" id="cd08966">
    <property type="entry name" value="EcFpg-like_N"/>
    <property type="match status" value="1"/>
</dbReference>
<dbReference type="FunFam" id="1.10.8.50:FF:000003">
    <property type="entry name" value="Formamidopyrimidine-DNA glycosylase"/>
    <property type="match status" value="1"/>
</dbReference>
<dbReference type="FunFam" id="3.20.190.10:FF:000001">
    <property type="entry name" value="Formamidopyrimidine-DNA glycosylase"/>
    <property type="match status" value="1"/>
</dbReference>
<dbReference type="Gene3D" id="1.10.8.50">
    <property type="match status" value="1"/>
</dbReference>
<dbReference type="Gene3D" id="3.20.190.10">
    <property type="entry name" value="MutM-like, N-terminal"/>
    <property type="match status" value="1"/>
</dbReference>
<dbReference type="HAMAP" id="MF_00103">
    <property type="entry name" value="Fapy_DNA_glycosyl"/>
    <property type="match status" value="1"/>
</dbReference>
<dbReference type="InterPro" id="IPR015886">
    <property type="entry name" value="DNA_glyclase/AP_lyase_DNA-bd"/>
</dbReference>
<dbReference type="InterPro" id="IPR015887">
    <property type="entry name" value="DNA_glyclase_Znf_dom_DNA_BS"/>
</dbReference>
<dbReference type="InterPro" id="IPR020629">
    <property type="entry name" value="Formamido-pyr_DNA_Glyclase"/>
</dbReference>
<dbReference type="InterPro" id="IPR012319">
    <property type="entry name" value="FPG_cat"/>
</dbReference>
<dbReference type="InterPro" id="IPR035937">
    <property type="entry name" value="MutM-like_N-ter"/>
</dbReference>
<dbReference type="InterPro" id="IPR010979">
    <property type="entry name" value="Ribosomal_uS13-like_H2TH"/>
</dbReference>
<dbReference type="InterPro" id="IPR000214">
    <property type="entry name" value="Znf_DNA_glyclase/AP_lyase"/>
</dbReference>
<dbReference type="InterPro" id="IPR010663">
    <property type="entry name" value="Znf_FPG/IleRS"/>
</dbReference>
<dbReference type="NCBIfam" id="TIGR00577">
    <property type="entry name" value="fpg"/>
    <property type="match status" value="1"/>
</dbReference>
<dbReference type="NCBIfam" id="NF002211">
    <property type="entry name" value="PRK01103.1"/>
    <property type="match status" value="1"/>
</dbReference>
<dbReference type="PANTHER" id="PTHR22993">
    <property type="entry name" value="FORMAMIDOPYRIMIDINE-DNA GLYCOSYLASE"/>
    <property type="match status" value="1"/>
</dbReference>
<dbReference type="PANTHER" id="PTHR22993:SF9">
    <property type="entry name" value="FORMAMIDOPYRIMIDINE-DNA GLYCOSYLASE"/>
    <property type="match status" value="1"/>
</dbReference>
<dbReference type="Pfam" id="PF01149">
    <property type="entry name" value="Fapy_DNA_glyco"/>
    <property type="match status" value="1"/>
</dbReference>
<dbReference type="Pfam" id="PF06831">
    <property type="entry name" value="H2TH"/>
    <property type="match status" value="1"/>
</dbReference>
<dbReference type="Pfam" id="PF06827">
    <property type="entry name" value="zf-FPG_IleRS"/>
    <property type="match status" value="1"/>
</dbReference>
<dbReference type="SMART" id="SM00898">
    <property type="entry name" value="Fapy_DNA_glyco"/>
    <property type="match status" value="1"/>
</dbReference>
<dbReference type="SMART" id="SM01232">
    <property type="entry name" value="H2TH"/>
    <property type="match status" value="1"/>
</dbReference>
<dbReference type="SUPFAM" id="SSF57716">
    <property type="entry name" value="Glucocorticoid receptor-like (DNA-binding domain)"/>
    <property type="match status" value="1"/>
</dbReference>
<dbReference type="SUPFAM" id="SSF81624">
    <property type="entry name" value="N-terminal domain of MutM-like DNA repair proteins"/>
    <property type="match status" value="1"/>
</dbReference>
<dbReference type="SUPFAM" id="SSF46946">
    <property type="entry name" value="S13-like H2TH domain"/>
    <property type="match status" value="1"/>
</dbReference>
<dbReference type="PROSITE" id="PS51068">
    <property type="entry name" value="FPG_CAT"/>
    <property type="match status" value="1"/>
</dbReference>
<dbReference type="PROSITE" id="PS01242">
    <property type="entry name" value="ZF_FPG_1"/>
    <property type="match status" value="1"/>
</dbReference>
<dbReference type="PROSITE" id="PS51066">
    <property type="entry name" value="ZF_FPG_2"/>
    <property type="match status" value="1"/>
</dbReference>
<feature type="initiator methionine" description="Removed" evidence="1">
    <location>
        <position position="1"/>
    </location>
</feature>
<feature type="chain" id="PRO_1000008777" description="Formamidopyrimidine-DNA glycosylase">
    <location>
        <begin position="2"/>
        <end position="271"/>
    </location>
</feature>
<feature type="zinc finger region" description="FPG-type" evidence="2">
    <location>
        <begin position="236"/>
        <end position="270"/>
    </location>
</feature>
<feature type="active site" description="Schiff-base intermediate with DNA" evidence="2">
    <location>
        <position position="2"/>
    </location>
</feature>
<feature type="active site" description="Proton donor" evidence="2">
    <location>
        <position position="3"/>
    </location>
</feature>
<feature type="active site" description="Proton donor; for beta-elimination activity" evidence="2">
    <location>
        <position position="57"/>
    </location>
</feature>
<feature type="active site" description="Proton donor; for delta-elimination activity" evidence="2">
    <location>
        <position position="260"/>
    </location>
</feature>
<feature type="binding site" evidence="2">
    <location>
        <position position="90"/>
    </location>
    <ligand>
        <name>DNA</name>
        <dbReference type="ChEBI" id="CHEBI:16991"/>
    </ligand>
</feature>
<feature type="binding site" evidence="2">
    <location>
        <position position="109"/>
    </location>
    <ligand>
        <name>DNA</name>
        <dbReference type="ChEBI" id="CHEBI:16991"/>
    </ligand>
</feature>
<feature type="binding site" evidence="2">
    <location>
        <position position="151"/>
    </location>
    <ligand>
        <name>DNA</name>
        <dbReference type="ChEBI" id="CHEBI:16991"/>
    </ligand>
</feature>
<gene>
    <name evidence="2" type="primary">mutM</name>
    <name evidence="2" type="synonym">fpg</name>
    <name type="ordered locus">Sputw3181_0067</name>
</gene>